<reference key="1">
    <citation type="journal article" date="1991" name="Biochemistry">
        <title>C-reactive protein (CRP) of the Syrian hamster.</title>
        <authorList>
            <person name="Dowton S.B."/>
            <person name="Holden S.N."/>
        </authorList>
    </citation>
    <scope>NUCLEOTIDE SEQUENCE [GENOMIC DNA]</scope>
</reference>
<name>CRP_MESAU</name>
<proteinExistence type="evidence at transcript level"/>
<gene>
    <name type="primary">CRP</name>
    <name type="synonym">PTX1</name>
</gene>
<sequence length="225" mass="24822">MEKLLWCSLVMIGFSQAFAQKDMSKTAFVFPKESANSYVSLEAQSKKTLKAFTVCLHIFTELSTTRSFSIFSYATKNSPNEILIFWSKDRGYAFGVGGPEVLFKASEIPEVPTHICASWESATGIAELWVDGKPKVRKILQKGYTVGTDASIILGQEQDSYGGGFDANQSLVGDIGDVNMWDIVLSPEQINTVCVGGTLDPSVLNWQALKYKVQGDVFIKPQLWP</sequence>
<protein>
    <recommendedName>
        <fullName>C-reactive protein</fullName>
    </recommendedName>
</protein>
<keyword id="KW-0011">Acute phase</keyword>
<keyword id="KW-0106">Calcium</keyword>
<keyword id="KW-1015">Disulfide bond</keyword>
<keyword id="KW-0479">Metal-binding</keyword>
<keyword id="KW-0873">Pyrrolidone carboxylic acid</keyword>
<keyword id="KW-1185">Reference proteome</keyword>
<keyword id="KW-0964">Secreted</keyword>
<keyword id="KW-0732">Signal</keyword>
<comment type="function">
    <text evidence="1">Displays several functions associated with host defense: it promotes agglutination, bacterial capsular swelling, phagocytosis and complement fixation through its calcium-dependent binding to phosphorylcholine. Can interact with DNA and histones and may scavenge nuclear material released from damaged circulating cells (By similarity).</text>
</comment>
<comment type="cofactor">
    <cofactor evidence="1">
        <name>Ca(2+)</name>
        <dbReference type="ChEBI" id="CHEBI:29108"/>
    </cofactor>
    <text evidence="1">Binds 2 calcium ions per subunit.</text>
</comment>
<comment type="subunit">
    <text evidence="1">Homopentamer. Pentraxin (or pentaxin) have a discoid arrangement of 5 non-covalently bound subunits. Interacts with FCN1; may regulate monocyte activation by FCN1 (By similarity).</text>
</comment>
<comment type="subcellular location">
    <subcellularLocation>
        <location>Secreted</location>
    </subcellularLocation>
</comment>
<comment type="tissue specificity">
    <text>Found in plasma.</text>
</comment>
<comment type="induction">
    <text>By interleukin-1, interleukin-6, and TNF-alpha.</text>
</comment>
<comment type="similarity">
    <text evidence="4">Belongs to the pentraxin family.</text>
</comment>
<comment type="online information" name="Protein Spotlight">
    <link uri="https://www.proteinspotlight.org/back_issues/030"/>
    <text>No more Christmas pudding? - Issue 30 of January 2003</text>
</comment>
<feature type="signal peptide" evidence="1">
    <location>
        <begin position="1"/>
        <end position="19"/>
    </location>
</feature>
<feature type="chain" id="PRO_0000023528" description="C-reactive protein">
    <location>
        <begin position="20"/>
        <end position="225"/>
    </location>
</feature>
<feature type="domain" description="Pentraxin (PTX)" evidence="3">
    <location>
        <begin position="24"/>
        <end position="225"/>
    </location>
</feature>
<feature type="binding site" evidence="1">
    <location>
        <position position="80"/>
    </location>
    <ligand>
        <name>Ca(2+)</name>
        <dbReference type="ChEBI" id="CHEBI:29108"/>
        <label>1</label>
    </ligand>
</feature>
<feature type="binding site" evidence="1">
    <location>
        <position position="157"/>
    </location>
    <ligand>
        <name>Ca(2+)</name>
        <dbReference type="ChEBI" id="CHEBI:29108"/>
        <label>1</label>
    </ligand>
</feature>
<feature type="binding site" evidence="3">
    <location>
        <position position="157"/>
    </location>
    <ligand>
        <name>Ca(2+)</name>
        <dbReference type="ChEBI" id="CHEBI:29108"/>
        <label>2</label>
    </ligand>
</feature>
<feature type="binding site" evidence="1">
    <location>
        <position position="158"/>
    </location>
    <ligand>
        <name>Ca(2+)</name>
        <dbReference type="ChEBI" id="CHEBI:29108"/>
        <label>1</label>
    </ligand>
</feature>
<feature type="binding site" evidence="1">
    <location>
        <position position="159"/>
    </location>
    <ligand>
        <name>Ca(2+)</name>
        <dbReference type="ChEBI" id="CHEBI:29108"/>
        <label>1</label>
    </ligand>
</feature>
<feature type="binding site" evidence="3">
    <location>
        <position position="159"/>
    </location>
    <ligand>
        <name>Ca(2+)</name>
        <dbReference type="ChEBI" id="CHEBI:29108"/>
        <label>2</label>
    </ligand>
</feature>
<feature type="binding site" evidence="3">
    <location>
        <position position="169"/>
    </location>
    <ligand>
        <name>Ca(2+)</name>
        <dbReference type="ChEBI" id="CHEBI:29108"/>
        <label>2</label>
    </ligand>
</feature>
<feature type="modified residue" description="Pyrrolidone carboxylic acid" evidence="2">
    <location>
        <position position="20"/>
    </location>
</feature>
<feature type="disulfide bond" evidence="3">
    <location>
        <begin position="55"/>
        <end position="116"/>
    </location>
</feature>
<evidence type="ECO:0000250" key="1"/>
<evidence type="ECO:0000250" key="2">
    <source>
        <dbReference type="UniProtKB" id="P02741"/>
    </source>
</evidence>
<evidence type="ECO:0000255" key="3">
    <source>
        <dbReference type="PROSITE-ProRule" id="PRU01172"/>
    </source>
</evidence>
<evidence type="ECO:0000305" key="4"/>
<dbReference type="EMBL" id="S56005">
    <property type="protein sequence ID" value="AAB19893.2"/>
    <property type="molecule type" value="Genomic_DNA"/>
</dbReference>
<dbReference type="PIR" id="A40326">
    <property type="entry name" value="A40326"/>
</dbReference>
<dbReference type="SMR" id="P49262"/>
<dbReference type="STRING" id="10036.ENSMAUP00000011817"/>
<dbReference type="Ensembl" id="ENSMAUT00000015714">
    <property type="protein sequence ID" value="ENSMAUP00000011817"/>
    <property type="gene ID" value="ENSMAUG00000012308"/>
</dbReference>
<dbReference type="GeneID" id="101826636"/>
<dbReference type="KEGG" id="maua:101826636"/>
<dbReference type="CTD" id="1401"/>
<dbReference type="eggNOG" id="ENOG502S201">
    <property type="taxonomic scope" value="Eukaryota"/>
</dbReference>
<dbReference type="OrthoDB" id="547680at2759"/>
<dbReference type="Proteomes" id="UP000189706">
    <property type="component" value="Unplaced"/>
</dbReference>
<dbReference type="GO" id="GO:0005615">
    <property type="term" value="C:extracellular space"/>
    <property type="evidence" value="ECO:0007669"/>
    <property type="project" value="Ensembl"/>
</dbReference>
<dbReference type="GO" id="GO:0005509">
    <property type="term" value="F:calcium ion binding"/>
    <property type="evidence" value="ECO:0007669"/>
    <property type="project" value="Ensembl"/>
</dbReference>
<dbReference type="GO" id="GO:0001849">
    <property type="term" value="F:complement component C1q complex binding"/>
    <property type="evidence" value="ECO:0007669"/>
    <property type="project" value="Ensembl"/>
</dbReference>
<dbReference type="GO" id="GO:0042802">
    <property type="term" value="F:identical protein binding"/>
    <property type="evidence" value="ECO:0007669"/>
    <property type="project" value="Ensembl"/>
</dbReference>
<dbReference type="GO" id="GO:0030169">
    <property type="term" value="F:low-density lipoprotein particle binding"/>
    <property type="evidence" value="ECO:0007669"/>
    <property type="project" value="Ensembl"/>
</dbReference>
<dbReference type="GO" id="GO:0050750">
    <property type="term" value="F:low-density lipoprotein particle receptor binding"/>
    <property type="evidence" value="ECO:0007669"/>
    <property type="project" value="Ensembl"/>
</dbReference>
<dbReference type="GO" id="GO:0006953">
    <property type="term" value="P:acute-phase response"/>
    <property type="evidence" value="ECO:0007669"/>
    <property type="project" value="UniProtKB-KW"/>
</dbReference>
<dbReference type="GO" id="GO:0045087">
    <property type="term" value="P:innate immune response"/>
    <property type="evidence" value="ECO:0007669"/>
    <property type="project" value="TreeGrafter"/>
</dbReference>
<dbReference type="GO" id="GO:0010888">
    <property type="term" value="P:negative regulation of lipid storage"/>
    <property type="evidence" value="ECO:0007669"/>
    <property type="project" value="Ensembl"/>
</dbReference>
<dbReference type="GO" id="GO:0010745">
    <property type="term" value="P:negative regulation of macrophage derived foam cell differentiation"/>
    <property type="evidence" value="ECO:0007669"/>
    <property type="project" value="Ensembl"/>
</dbReference>
<dbReference type="GO" id="GO:0032945">
    <property type="term" value="P:negative regulation of mononuclear cell proliferation"/>
    <property type="evidence" value="ECO:0007669"/>
    <property type="project" value="Ensembl"/>
</dbReference>
<dbReference type="GO" id="GO:0010628">
    <property type="term" value="P:positive regulation of gene expression"/>
    <property type="evidence" value="ECO:0007669"/>
    <property type="project" value="Ensembl"/>
</dbReference>
<dbReference type="GO" id="GO:0032930">
    <property type="term" value="P:positive regulation of superoxide anion generation"/>
    <property type="evidence" value="ECO:0007669"/>
    <property type="project" value="Ensembl"/>
</dbReference>
<dbReference type="GO" id="GO:0032677">
    <property type="term" value="P:regulation of interleukin-8 production"/>
    <property type="evidence" value="ECO:0000250"/>
    <property type="project" value="UniProtKB"/>
</dbReference>
<dbReference type="GO" id="GO:0042310">
    <property type="term" value="P:vasoconstriction"/>
    <property type="evidence" value="ECO:0007669"/>
    <property type="project" value="Ensembl"/>
</dbReference>
<dbReference type="CDD" id="cd00152">
    <property type="entry name" value="PTX"/>
    <property type="match status" value="1"/>
</dbReference>
<dbReference type="FunFam" id="2.60.120.200:FF:000070">
    <property type="entry name" value="Serum amyloid P-component"/>
    <property type="match status" value="1"/>
</dbReference>
<dbReference type="Gene3D" id="2.60.120.200">
    <property type="match status" value="1"/>
</dbReference>
<dbReference type="InterPro" id="IPR013320">
    <property type="entry name" value="ConA-like_dom_sf"/>
</dbReference>
<dbReference type="InterPro" id="IPR030476">
    <property type="entry name" value="Pentaxin_CS"/>
</dbReference>
<dbReference type="InterPro" id="IPR001759">
    <property type="entry name" value="Pentraxin-related"/>
</dbReference>
<dbReference type="InterPro" id="IPR051005">
    <property type="entry name" value="Pentraxin_domain"/>
</dbReference>
<dbReference type="PANTHER" id="PTHR45869:SF7">
    <property type="entry name" value="C-REACTIVE PROTEIN"/>
    <property type="match status" value="1"/>
</dbReference>
<dbReference type="PANTHER" id="PTHR45869">
    <property type="entry name" value="C-REACTIVE PROTEIN-RELATED"/>
    <property type="match status" value="1"/>
</dbReference>
<dbReference type="Pfam" id="PF00354">
    <property type="entry name" value="Pentaxin"/>
    <property type="match status" value="1"/>
</dbReference>
<dbReference type="PRINTS" id="PR00895">
    <property type="entry name" value="PENTAXIN"/>
</dbReference>
<dbReference type="SMART" id="SM00159">
    <property type="entry name" value="PTX"/>
    <property type="match status" value="1"/>
</dbReference>
<dbReference type="SUPFAM" id="SSF49899">
    <property type="entry name" value="Concanavalin A-like lectins/glucanases"/>
    <property type="match status" value="1"/>
</dbReference>
<dbReference type="PROSITE" id="PS00289">
    <property type="entry name" value="PTX_1"/>
    <property type="match status" value="1"/>
</dbReference>
<dbReference type="PROSITE" id="PS51828">
    <property type="entry name" value="PTX_2"/>
    <property type="match status" value="1"/>
</dbReference>
<accession>P49262</accession>
<organism>
    <name type="scientific">Mesocricetus auratus</name>
    <name type="common">Golden hamster</name>
    <dbReference type="NCBI Taxonomy" id="10036"/>
    <lineage>
        <taxon>Eukaryota</taxon>
        <taxon>Metazoa</taxon>
        <taxon>Chordata</taxon>
        <taxon>Craniata</taxon>
        <taxon>Vertebrata</taxon>
        <taxon>Euteleostomi</taxon>
        <taxon>Mammalia</taxon>
        <taxon>Eutheria</taxon>
        <taxon>Euarchontoglires</taxon>
        <taxon>Glires</taxon>
        <taxon>Rodentia</taxon>
        <taxon>Myomorpha</taxon>
        <taxon>Muroidea</taxon>
        <taxon>Cricetidae</taxon>
        <taxon>Cricetinae</taxon>
        <taxon>Mesocricetus</taxon>
    </lineage>
</organism>